<sequence>MAGFDENVAVMGEWVPRSPSPGTLFSSAIGEEKSSKRVLERELSLNHGQVIGLEEDTSSNHNKDSSQSNVFRGGLSERIAARAGFNAPRLNTENIRTNTDFSIDSNLRSPCLTISSPGLSPATLLESPVFLSNPLAQPSPTTGKFPFLPGVNGNALSSEKAKDEFFDDIGASFSFHPVSRSSSSFFQGTTEMMSVDYGNYNNRSSSHQSAEEVKPGSENIESSNLYGIETDNQNGQNKTSDVTTNTSLETVDHQEEEEEQRRGDSMAGGAPAEDGYNWRKYGQKLVKGSEYPRSYYKCTNPNCQVKKKVERSREGHITEIIYKGAHNHLKPPPNRRSGMQVDGTEQVEQQQQQRDSAATWVSCNNTQQQGGSNENNVEEGSTRFEYGNQSGSIQAQTGGQYESGDPVVVVDASSTFSNDEDEDDRGTHGSVSLGYDGGGGGGGGEGDESESKRRKLEAFAAEMSGSTRAIREPRVVVQTTSDVDILDDGYRWRKYGQKVVKGNPNPRSYYKCTAPGCTVRKHVERASHDLKSVITTYEGKHNHDVPAARNSSHGGGGDSGNGNSGGSAAVSHHYHNGHHSEPPRGRFDRQVTTNNQSPFSRPFSFQPHLGPPSGFSFGLGQTGLVNLSMPGLAYGQGKMPGLPHPYMTQPVGMSEAMMQRGMEPKVEPVSDSGQSVYNQIMSRLPQI</sequence>
<evidence type="ECO:0000250" key="1">
    <source>
        <dbReference type="UniProtKB" id="Q9SI37"/>
    </source>
</evidence>
<evidence type="ECO:0000255" key="2">
    <source>
        <dbReference type="PROSITE-ProRule" id="PRU00223"/>
    </source>
</evidence>
<evidence type="ECO:0000256" key="3">
    <source>
        <dbReference type="SAM" id="MobiDB-lite"/>
    </source>
</evidence>
<evidence type="ECO:0000269" key="4">
    <source>
    </source>
</evidence>
<evidence type="ECO:0000269" key="5">
    <source>
    </source>
</evidence>
<evidence type="ECO:0000303" key="6">
    <source ref="1"/>
</evidence>
<evidence type="ECO:0000305" key="7"/>
<evidence type="ECO:0000312" key="8">
    <source>
        <dbReference type="Araport" id="AT5G56270"/>
    </source>
</evidence>
<evidence type="ECO:0000312" key="9">
    <source>
        <dbReference type="EMBL" id="BAB08871.1"/>
    </source>
</evidence>
<evidence type="ECO:0007829" key="10">
    <source>
        <dbReference type="PDB" id="6J4F"/>
    </source>
</evidence>
<comment type="function">
    <text evidence="5">Transcription factor. Regulates WOX8 and WOX9 expression and basal cell division patterns during early embryogenesis. Interacts specifically with the W box (5'-(T)TGAC[CT]-3'), a frequently occurring elicitor-responsive cis-acting element. Required to repolarize the zygote from a transient symmetric state.</text>
</comment>
<comment type="subcellular location">
    <subcellularLocation>
        <location evidence="1">Nucleus</location>
    </subcellularLocation>
</comment>
<comment type="tissue specificity">
    <text evidence="4 5">Low expression in senescent leaves (PubMed:11722756). Expressed in both the unfertilized egg cell and the pollen tube (PubMed:21316593).</text>
</comment>
<comment type="disruption phenotype">
    <text evidence="5">Strong defects in embryo development.</text>
</comment>
<comment type="similarity">
    <text evidence="7">Belongs to the WRKY group I family.</text>
</comment>
<keyword id="KW-0002">3D-structure</keyword>
<keyword id="KW-0217">Developmental protein</keyword>
<keyword id="KW-0238">DNA-binding</keyword>
<keyword id="KW-0479">Metal-binding</keyword>
<keyword id="KW-0539">Nucleus</keyword>
<keyword id="KW-1185">Reference proteome</keyword>
<keyword id="KW-0677">Repeat</keyword>
<keyword id="KW-0804">Transcription</keyword>
<keyword id="KW-0805">Transcription regulation</keyword>
<keyword id="KW-0862">Zinc</keyword>
<dbReference type="EMBL" id="AF418308">
    <property type="protein sequence ID" value="AAL13039.1"/>
    <property type="molecule type" value="mRNA"/>
</dbReference>
<dbReference type="EMBL" id="AB026656">
    <property type="protein sequence ID" value="BAB08871.1"/>
    <property type="molecule type" value="Genomic_DNA"/>
</dbReference>
<dbReference type="EMBL" id="CP002688">
    <property type="protein sequence ID" value="AED96743.1"/>
    <property type="molecule type" value="Genomic_DNA"/>
</dbReference>
<dbReference type="EMBL" id="AY096493">
    <property type="protein sequence ID" value="AAM20132.1"/>
    <property type="molecule type" value="mRNA"/>
</dbReference>
<dbReference type="EMBL" id="AY123006">
    <property type="protein sequence ID" value="AAM67539.1"/>
    <property type="molecule type" value="mRNA"/>
</dbReference>
<dbReference type="RefSeq" id="NP_200438.1">
    <property type="nucleotide sequence ID" value="NM_125010.3"/>
</dbReference>
<dbReference type="PDB" id="6J4F">
    <property type="method" value="X-ray"/>
    <property type="resolution" value="2.40 A"/>
    <property type="chains" value="B/F=259-331"/>
</dbReference>
<dbReference type="PDBsum" id="6J4F"/>
<dbReference type="SMR" id="Q9FG77"/>
<dbReference type="BioGRID" id="20970">
    <property type="interactions" value="2"/>
</dbReference>
<dbReference type="FunCoup" id="Q9FG77">
    <property type="interactions" value="463"/>
</dbReference>
<dbReference type="IntAct" id="Q9FG77">
    <property type="interactions" value="2"/>
</dbReference>
<dbReference type="STRING" id="3702.Q9FG77"/>
<dbReference type="GlyGen" id="Q9FG77">
    <property type="glycosylation" value="1 site"/>
</dbReference>
<dbReference type="iPTMnet" id="Q9FG77"/>
<dbReference type="PaxDb" id="3702-AT5G56270.1"/>
<dbReference type="ProteomicsDB" id="246482"/>
<dbReference type="EnsemblPlants" id="AT5G56270.1">
    <property type="protein sequence ID" value="AT5G56270.1"/>
    <property type="gene ID" value="AT5G56270"/>
</dbReference>
<dbReference type="GeneID" id="835726"/>
<dbReference type="Gramene" id="AT5G56270.1">
    <property type="protein sequence ID" value="AT5G56270.1"/>
    <property type="gene ID" value="AT5G56270"/>
</dbReference>
<dbReference type="KEGG" id="ath:AT5G56270"/>
<dbReference type="Araport" id="AT5G56270"/>
<dbReference type="TAIR" id="AT5G56270">
    <property type="gene designation" value="WRKY2"/>
</dbReference>
<dbReference type="eggNOG" id="ENOG502QU86">
    <property type="taxonomic scope" value="Eukaryota"/>
</dbReference>
<dbReference type="HOGENOM" id="CLU_012086_3_0_1"/>
<dbReference type="InParanoid" id="Q9FG77"/>
<dbReference type="OMA" id="MGEWVPR"/>
<dbReference type="PhylomeDB" id="Q9FG77"/>
<dbReference type="PRO" id="PR:Q9FG77"/>
<dbReference type="Proteomes" id="UP000006548">
    <property type="component" value="Chromosome 5"/>
</dbReference>
<dbReference type="ExpressionAtlas" id="Q9FG77">
    <property type="expression patterns" value="baseline and differential"/>
</dbReference>
<dbReference type="GO" id="GO:0005634">
    <property type="term" value="C:nucleus"/>
    <property type="evidence" value="ECO:0007669"/>
    <property type="project" value="UniProtKB-SubCell"/>
</dbReference>
<dbReference type="GO" id="GO:0003700">
    <property type="term" value="F:DNA-binding transcription factor activity"/>
    <property type="evidence" value="ECO:0000250"/>
    <property type="project" value="TAIR"/>
</dbReference>
<dbReference type="GO" id="GO:0046872">
    <property type="term" value="F:metal ion binding"/>
    <property type="evidence" value="ECO:0007669"/>
    <property type="project" value="UniProtKB-KW"/>
</dbReference>
<dbReference type="GO" id="GO:0000976">
    <property type="term" value="F:transcription cis-regulatory region binding"/>
    <property type="evidence" value="ECO:0000353"/>
    <property type="project" value="TAIR"/>
</dbReference>
<dbReference type="GO" id="GO:0030010">
    <property type="term" value="P:establishment of cell polarity"/>
    <property type="evidence" value="ECO:0000315"/>
    <property type="project" value="TAIR"/>
</dbReference>
<dbReference type="GO" id="GO:0009942">
    <property type="term" value="P:longitudinal axis specification"/>
    <property type="evidence" value="ECO:0000315"/>
    <property type="project" value="TAIR"/>
</dbReference>
<dbReference type="GO" id="GO:0009555">
    <property type="term" value="P:pollen development"/>
    <property type="evidence" value="ECO:0000316"/>
    <property type="project" value="TAIR"/>
</dbReference>
<dbReference type="GO" id="GO:0006355">
    <property type="term" value="P:regulation of DNA-templated transcription"/>
    <property type="evidence" value="ECO:0000315"/>
    <property type="project" value="TAIR"/>
</dbReference>
<dbReference type="FunFam" id="2.20.25.80:FF:000006">
    <property type="entry name" value="WRKY transcription factor"/>
    <property type="match status" value="1"/>
</dbReference>
<dbReference type="FunFam" id="2.20.25.80:FF:000001">
    <property type="entry name" value="WRKY transcription factor 33"/>
    <property type="match status" value="1"/>
</dbReference>
<dbReference type="Gene3D" id="2.20.25.80">
    <property type="entry name" value="WRKY domain"/>
    <property type="match status" value="2"/>
</dbReference>
<dbReference type="InterPro" id="IPR003657">
    <property type="entry name" value="WRKY_dom"/>
</dbReference>
<dbReference type="InterPro" id="IPR036576">
    <property type="entry name" value="WRKY_dom_sf"/>
</dbReference>
<dbReference type="InterPro" id="IPR044810">
    <property type="entry name" value="WRKY_plant"/>
</dbReference>
<dbReference type="PANTHER" id="PTHR31221:SF318">
    <property type="entry name" value="WRKY TRANSCRIPTION FACTOR 2-RELATED"/>
    <property type="match status" value="1"/>
</dbReference>
<dbReference type="PANTHER" id="PTHR31221">
    <property type="entry name" value="WRKY TRANSCRIPTION FACTOR PROTEIN 1-RELATED"/>
    <property type="match status" value="1"/>
</dbReference>
<dbReference type="Pfam" id="PF03106">
    <property type="entry name" value="WRKY"/>
    <property type="match status" value="2"/>
</dbReference>
<dbReference type="SMART" id="SM00774">
    <property type="entry name" value="WRKY"/>
    <property type="match status" value="2"/>
</dbReference>
<dbReference type="SUPFAM" id="SSF118290">
    <property type="entry name" value="WRKY DNA-binding domain"/>
    <property type="match status" value="2"/>
</dbReference>
<dbReference type="PROSITE" id="PS50811">
    <property type="entry name" value="WRKY"/>
    <property type="match status" value="2"/>
</dbReference>
<gene>
    <name evidence="6" type="primary">WRKY2</name>
    <name evidence="8" type="ordered locus">At5g56270</name>
    <name type="ORF">K24C1.9</name>
    <name evidence="9" type="ORF">MXK23.1</name>
</gene>
<protein>
    <recommendedName>
        <fullName evidence="6">Probable WRKY transcription factor 2</fullName>
    </recommendedName>
    <alternativeName>
        <fullName evidence="6">WRKY DNA-binding protein 2</fullName>
    </alternativeName>
</protein>
<feature type="chain" id="PRO_0000133645" description="Probable WRKY transcription factor 2">
    <location>
        <begin position="1"/>
        <end position="687"/>
    </location>
</feature>
<feature type="DNA-binding region" description="WRKY 1" evidence="2">
    <location>
        <begin position="267"/>
        <end position="331"/>
    </location>
</feature>
<feature type="DNA-binding region" description="WRKY 2" evidence="2">
    <location>
        <begin position="481"/>
        <end position="546"/>
    </location>
</feature>
<feature type="region of interest" description="Disordered" evidence="3">
    <location>
        <begin position="197"/>
        <end position="276"/>
    </location>
</feature>
<feature type="region of interest" description="Disordered" evidence="3">
    <location>
        <begin position="324"/>
        <end position="384"/>
    </location>
</feature>
<feature type="region of interest" description="Disordered" evidence="3">
    <location>
        <begin position="416"/>
        <end position="453"/>
    </location>
</feature>
<feature type="region of interest" description="Disordered" evidence="3">
    <location>
        <begin position="537"/>
        <end position="599"/>
    </location>
</feature>
<feature type="compositionally biased region" description="Polar residues" evidence="3">
    <location>
        <begin position="199"/>
        <end position="208"/>
    </location>
</feature>
<feature type="compositionally biased region" description="Polar residues" evidence="3">
    <location>
        <begin position="219"/>
        <end position="249"/>
    </location>
</feature>
<feature type="compositionally biased region" description="Polar residues" evidence="3">
    <location>
        <begin position="354"/>
        <end position="379"/>
    </location>
</feature>
<feature type="compositionally biased region" description="Gly residues" evidence="3">
    <location>
        <begin position="435"/>
        <end position="444"/>
    </location>
</feature>
<feature type="compositionally biased region" description="Gly residues" evidence="3">
    <location>
        <begin position="553"/>
        <end position="565"/>
    </location>
</feature>
<feature type="compositionally biased region" description="Basic and acidic residues" evidence="3">
    <location>
        <begin position="578"/>
        <end position="589"/>
    </location>
</feature>
<feature type="compositionally biased region" description="Polar residues" evidence="3">
    <location>
        <begin position="590"/>
        <end position="599"/>
    </location>
</feature>
<feature type="binding site" evidence="1">
    <location>
        <position position="298"/>
    </location>
    <ligand>
        <name>Zn(2+)</name>
        <dbReference type="ChEBI" id="CHEBI:29105"/>
    </ligand>
</feature>
<feature type="binding site" evidence="1">
    <location>
        <position position="303"/>
    </location>
    <ligand>
        <name>Zn(2+)</name>
        <dbReference type="ChEBI" id="CHEBI:29105"/>
    </ligand>
</feature>
<feature type="binding site" evidence="1">
    <location>
        <position position="326"/>
    </location>
    <ligand>
        <name>Zn(2+)</name>
        <dbReference type="ChEBI" id="CHEBI:29105"/>
    </ligand>
</feature>
<feature type="binding site" evidence="1">
    <location>
        <position position="328"/>
    </location>
    <ligand>
        <name>Zn(2+)</name>
        <dbReference type="ChEBI" id="CHEBI:29105"/>
    </ligand>
</feature>
<feature type="binding site" evidence="1">
    <location>
        <position position="512"/>
    </location>
    <ligand>
        <name>Zn(2+)</name>
        <dbReference type="ChEBI" id="CHEBI:29105"/>
    </ligand>
</feature>
<feature type="binding site" evidence="1">
    <location>
        <position position="517"/>
    </location>
    <ligand>
        <name>Zn(2+)</name>
        <dbReference type="ChEBI" id="CHEBI:29105"/>
    </ligand>
</feature>
<feature type="binding site" evidence="1">
    <location>
        <position position="541"/>
    </location>
    <ligand>
        <name>Zn(2+)</name>
        <dbReference type="ChEBI" id="CHEBI:29105"/>
    </ligand>
</feature>
<feature type="binding site" evidence="1">
    <location>
        <position position="543"/>
    </location>
    <ligand>
        <name>Zn(2+)</name>
        <dbReference type="ChEBI" id="CHEBI:29105"/>
    </ligand>
</feature>
<feature type="strand" evidence="10">
    <location>
        <begin position="282"/>
        <end position="286"/>
    </location>
</feature>
<feature type="turn" evidence="10">
    <location>
        <begin position="287"/>
        <end position="290"/>
    </location>
</feature>
<feature type="strand" evidence="10">
    <location>
        <begin position="291"/>
        <end position="298"/>
    </location>
</feature>
<feature type="strand" evidence="10">
    <location>
        <begin position="306"/>
        <end position="311"/>
    </location>
</feature>
<feature type="strand" evidence="10">
    <location>
        <begin position="317"/>
        <end position="324"/>
    </location>
</feature>
<name>WRKY2_ARATH</name>
<accession>Q9FG77</accession>
<organism>
    <name type="scientific">Arabidopsis thaliana</name>
    <name type="common">Mouse-ear cress</name>
    <dbReference type="NCBI Taxonomy" id="3702"/>
    <lineage>
        <taxon>Eukaryota</taxon>
        <taxon>Viridiplantae</taxon>
        <taxon>Streptophyta</taxon>
        <taxon>Embryophyta</taxon>
        <taxon>Tracheophyta</taxon>
        <taxon>Spermatophyta</taxon>
        <taxon>Magnoliopsida</taxon>
        <taxon>eudicotyledons</taxon>
        <taxon>Gunneridae</taxon>
        <taxon>Pentapetalae</taxon>
        <taxon>rosids</taxon>
        <taxon>malvids</taxon>
        <taxon>Brassicales</taxon>
        <taxon>Brassicaceae</taxon>
        <taxon>Camelineae</taxon>
        <taxon>Arabidopsis</taxon>
    </lineage>
</organism>
<reference key="1">
    <citation type="submission" date="2001-09" db="EMBL/GenBank/DDBJ databases">
        <title>Arabidopsis thaliana transcription factor WRKY2.</title>
        <authorList>
            <person name="Ulker B."/>
            <person name="Kushnir S."/>
            <person name="Somssich I.E."/>
        </authorList>
    </citation>
    <scope>NUCLEOTIDE SEQUENCE [MRNA]</scope>
    <source>
        <strain>cv. Columbia</strain>
        <tissue>Flower</tissue>
    </source>
</reference>
<reference key="2">
    <citation type="submission" date="1999-04" db="EMBL/GenBank/DDBJ databases">
        <title>Structural analysis of Arabidopsis thaliana chromosome 5. XI.</title>
        <authorList>
            <person name="Kaneko T."/>
            <person name="Katoh T."/>
            <person name="Asamizu E."/>
            <person name="Sato S."/>
            <person name="Nakamura Y."/>
            <person name="Kotani H."/>
            <person name="Tabata S."/>
        </authorList>
    </citation>
    <scope>NUCLEOTIDE SEQUENCE [LARGE SCALE GENOMIC DNA]</scope>
    <source>
        <strain>cv. Columbia</strain>
    </source>
</reference>
<reference key="3">
    <citation type="journal article" date="2017" name="Plant J.">
        <title>Araport11: a complete reannotation of the Arabidopsis thaliana reference genome.</title>
        <authorList>
            <person name="Cheng C.Y."/>
            <person name="Krishnakumar V."/>
            <person name="Chan A.P."/>
            <person name="Thibaud-Nissen F."/>
            <person name="Schobel S."/>
            <person name="Town C.D."/>
        </authorList>
    </citation>
    <scope>GENOME REANNOTATION</scope>
    <source>
        <strain>cv. Columbia</strain>
    </source>
</reference>
<reference key="4">
    <citation type="journal article" date="2003" name="Science">
        <title>Empirical analysis of transcriptional activity in the Arabidopsis genome.</title>
        <authorList>
            <person name="Yamada K."/>
            <person name="Lim J."/>
            <person name="Dale J.M."/>
            <person name="Chen H."/>
            <person name="Shinn P."/>
            <person name="Palm C.J."/>
            <person name="Southwick A.M."/>
            <person name="Wu H.C."/>
            <person name="Kim C.J."/>
            <person name="Nguyen M."/>
            <person name="Pham P.K."/>
            <person name="Cheuk R.F."/>
            <person name="Karlin-Newmann G."/>
            <person name="Liu S.X."/>
            <person name="Lam B."/>
            <person name="Sakano H."/>
            <person name="Wu T."/>
            <person name="Yu G."/>
            <person name="Miranda M."/>
            <person name="Quach H.L."/>
            <person name="Tripp M."/>
            <person name="Chang C.H."/>
            <person name="Lee J.M."/>
            <person name="Toriumi M.J."/>
            <person name="Chan M.M."/>
            <person name="Tang C.C."/>
            <person name="Onodera C.S."/>
            <person name="Deng J.M."/>
            <person name="Akiyama K."/>
            <person name="Ansari Y."/>
            <person name="Arakawa T."/>
            <person name="Banh J."/>
            <person name="Banno F."/>
            <person name="Bowser L."/>
            <person name="Brooks S.Y."/>
            <person name="Carninci P."/>
            <person name="Chao Q."/>
            <person name="Choy N."/>
            <person name="Enju A."/>
            <person name="Goldsmith A.D."/>
            <person name="Gurjal M."/>
            <person name="Hansen N.F."/>
            <person name="Hayashizaki Y."/>
            <person name="Johnson-Hopson C."/>
            <person name="Hsuan V.W."/>
            <person name="Iida K."/>
            <person name="Karnes M."/>
            <person name="Khan S."/>
            <person name="Koesema E."/>
            <person name="Ishida J."/>
            <person name="Jiang P.X."/>
            <person name="Jones T."/>
            <person name="Kawai J."/>
            <person name="Kamiya A."/>
            <person name="Meyers C."/>
            <person name="Nakajima M."/>
            <person name="Narusaka M."/>
            <person name="Seki M."/>
            <person name="Sakurai T."/>
            <person name="Satou M."/>
            <person name="Tamse R."/>
            <person name="Vaysberg M."/>
            <person name="Wallender E.K."/>
            <person name="Wong C."/>
            <person name="Yamamura Y."/>
            <person name="Yuan S."/>
            <person name="Shinozaki K."/>
            <person name="Davis R.W."/>
            <person name="Theologis A."/>
            <person name="Ecker J.R."/>
        </authorList>
    </citation>
    <scope>NUCLEOTIDE SEQUENCE [LARGE SCALE MRNA]</scope>
    <source>
        <strain>cv. Columbia</strain>
    </source>
</reference>
<reference key="5">
    <citation type="journal article" date="2001" name="Plant J.">
        <title>A new member of the Arabidopsis WRKY transcription factor family, AtWRKY6, is associated with both senescence- and defence-related processes.</title>
        <authorList>
            <person name="Robatzek S."/>
            <person name="Somssich I.E."/>
        </authorList>
    </citation>
    <scope>TISSUE SPECIFICITY</scope>
</reference>
<reference key="6">
    <citation type="journal article" date="2007" name="Mol. Cell. Proteomics">
        <title>Multidimensional protein identification technology (MudPIT) analysis of ubiquitinated proteins in plants.</title>
        <authorList>
            <person name="Maor R."/>
            <person name="Jones A."/>
            <person name="Nuehse T.S."/>
            <person name="Studholme D.J."/>
            <person name="Peck S.C."/>
            <person name="Shirasu K."/>
        </authorList>
    </citation>
    <scope>IDENTIFICATION BY MASS SPECTROMETRY [LARGE SCALE ANALYSIS]</scope>
    <source>
        <strain>cv. Landsberg erecta</strain>
    </source>
</reference>
<reference key="7">
    <citation type="journal article" date="2011" name="Dev. Cell">
        <title>Transcriptional activation of Arabidopsis axis patterning genes WOX8/9 links zygote polarity to embryo development.</title>
        <authorList>
            <person name="Ueda M."/>
            <person name="Zhang Z."/>
            <person name="Laux T."/>
        </authorList>
    </citation>
    <scope>FUNCTION</scope>
    <scope>DISRUPTION PHENOTYPE</scope>
</reference>
<proteinExistence type="evidence at protein level"/>